<proteinExistence type="inferred from homology"/>
<organism>
    <name type="scientific">Shigella boydii serotype 18 (strain CDC 3083-94 / BS512)</name>
    <dbReference type="NCBI Taxonomy" id="344609"/>
    <lineage>
        <taxon>Bacteria</taxon>
        <taxon>Pseudomonadati</taxon>
        <taxon>Pseudomonadota</taxon>
        <taxon>Gammaproteobacteria</taxon>
        <taxon>Enterobacterales</taxon>
        <taxon>Enterobacteriaceae</taxon>
        <taxon>Shigella</taxon>
    </lineage>
</organism>
<protein>
    <recommendedName>
        <fullName evidence="1">Tryptophan synthase beta chain</fullName>
        <ecNumber evidence="1">4.2.1.20</ecNumber>
    </recommendedName>
</protein>
<sequence length="397" mass="42931">MTTLLNPYFGEFGGMYVPQILMPALRQLEEAFVSAQKDPEFQAQFNDLLKNYAGRPTALTKCQNITAGTNTTLYLKREDLLHGGAHKTNQVLGQALLAKRMGKTEIIAETGAGQHGVASALASALLGLKCRIYMGAKDVERQSPNVFRMRLMGAEVIPVHSGSATLKDACNEALRDWSGSYETAHYMLGTAAGPHPYPTIVCEFQRMIGEETKAQILEREGRLPDAVIACVGGGSNAIGMFADFINETNVGLIGVEPGGHGIETGEHGAPLKHGRVGIYFGMKAPMMQTEDGQIEESYSISAGLDFPSVGPQHAYLNSTGRADYVSITDDEALEAFKTLCLHEGIIPALESSHALAHALKMMRETPEKEQLLVVNLSGRGDKDIFTVHDILKARGEI</sequence>
<evidence type="ECO:0000255" key="1">
    <source>
        <dbReference type="HAMAP-Rule" id="MF_00133"/>
    </source>
</evidence>
<feature type="chain" id="PRO_1000095824" description="Tryptophan synthase beta chain">
    <location>
        <begin position="1"/>
        <end position="397"/>
    </location>
</feature>
<feature type="modified residue" description="N6-(pyridoxal phosphate)lysine" evidence="1">
    <location>
        <position position="87"/>
    </location>
</feature>
<name>TRPB_SHIB3</name>
<dbReference type="EC" id="4.2.1.20" evidence="1"/>
<dbReference type="EMBL" id="CP001063">
    <property type="protein sequence ID" value="ACD06918.1"/>
    <property type="molecule type" value="Genomic_DNA"/>
</dbReference>
<dbReference type="RefSeq" id="WP_000209504.1">
    <property type="nucleotide sequence ID" value="NC_010658.1"/>
</dbReference>
<dbReference type="SMR" id="B2U0F2"/>
<dbReference type="STRING" id="344609.SbBS512_E1486"/>
<dbReference type="KEGG" id="sbc:SbBS512_E1486"/>
<dbReference type="HOGENOM" id="CLU_016734_3_1_6"/>
<dbReference type="UniPathway" id="UPA00035">
    <property type="reaction ID" value="UER00044"/>
</dbReference>
<dbReference type="Proteomes" id="UP000001030">
    <property type="component" value="Chromosome"/>
</dbReference>
<dbReference type="GO" id="GO:0005737">
    <property type="term" value="C:cytoplasm"/>
    <property type="evidence" value="ECO:0007669"/>
    <property type="project" value="TreeGrafter"/>
</dbReference>
<dbReference type="GO" id="GO:0004834">
    <property type="term" value="F:tryptophan synthase activity"/>
    <property type="evidence" value="ECO:0007669"/>
    <property type="project" value="UniProtKB-UniRule"/>
</dbReference>
<dbReference type="CDD" id="cd06446">
    <property type="entry name" value="Trp-synth_B"/>
    <property type="match status" value="1"/>
</dbReference>
<dbReference type="FunFam" id="3.40.50.1100:FF:000001">
    <property type="entry name" value="Tryptophan synthase beta chain"/>
    <property type="match status" value="1"/>
</dbReference>
<dbReference type="FunFam" id="3.40.50.1100:FF:000004">
    <property type="entry name" value="Tryptophan synthase beta chain"/>
    <property type="match status" value="1"/>
</dbReference>
<dbReference type="Gene3D" id="3.40.50.1100">
    <property type="match status" value="2"/>
</dbReference>
<dbReference type="HAMAP" id="MF_00133">
    <property type="entry name" value="Trp_synth_beta"/>
    <property type="match status" value="1"/>
</dbReference>
<dbReference type="InterPro" id="IPR006653">
    <property type="entry name" value="Trp_synth_b_CS"/>
</dbReference>
<dbReference type="InterPro" id="IPR006654">
    <property type="entry name" value="Trp_synth_beta"/>
</dbReference>
<dbReference type="InterPro" id="IPR023026">
    <property type="entry name" value="Trp_synth_beta/beta-like"/>
</dbReference>
<dbReference type="InterPro" id="IPR001926">
    <property type="entry name" value="TrpB-like_PALP"/>
</dbReference>
<dbReference type="InterPro" id="IPR036052">
    <property type="entry name" value="TrpB-like_PALP_sf"/>
</dbReference>
<dbReference type="NCBIfam" id="TIGR00263">
    <property type="entry name" value="trpB"/>
    <property type="match status" value="1"/>
</dbReference>
<dbReference type="PANTHER" id="PTHR48077:SF3">
    <property type="entry name" value="TRYPTOPHAN SYNTHASE"/>
    <property type="match status" value="1"/>
</dbReference>
<dbReference type="PANTHER" id="PTHR48077">
    <property type="entry name" value="TRYPTOPHAN SYNTHASE-RELATED"/>
    <property type="match status" value="1"/>
</dbReference>
<dbReference type="Pfam" id="PF00291">
    <property type="entry name" value="PALP"/>
    <property type="match status" value="1"/>
</dbReference>
<dbReference type="PIRSF" id="PIRSF001413">
    <property type="entry name" value="Trp_syn_beta"/>
    <property type="match status" value="1"/>
</dbReference>
<dbReference type="SUPFAM" id="SSF53686">
    <property type="entry name" value="Tryptophan synthase beta subunit-like PLP-dependent enzymes"/>
    <property type="match status" value="1"/>
</dbReference>
<dbReference type="PROSITE" id="PS00168">
    <property type="entry name" value="TRP_SYNTHASE_BETA"/>
    <property type="match status" value="1"/>
</dbReference>
<accession>B2U0F2</accession>
<comment type="function">
    <text evidence="1">The beta subunit is responsible for the synthesis of L-tryptophan from indole and L-serine.</text>
</comment>
<comment type="catalytic activity">
    <reaction evidence="1">
        <text>(1S,2R)-1-C-(indol-3-yl)glycerol 3-phosphate + L-serine = D-glyceraldehyde 3-phosphate + L-tryptophan + H2O</text>
        <dbReference type="Rhea" id="RHEA:10532"/>
        <dbReference type="ChEBI" id="CHEBI:15377"/>
        <dbReference type="ChEBI" id="CHEBI:33384"/>
        <dbReference type="ChEBI" id="CHEBI:57912"/>
        <dbReference type="ChEBI" id="CHEBI:58866"/>
        <dbReference type="ChEBI" id="CHEBI:59776"/>
        <dbReference type="EC" id="4.2.1.20"/>
    </reaction>
</comment>
<comment type="cofactor">
    <cofactor evidence="1">
        <name>pyridoxal 5'-phosphate</name>
        <dbReference type="ChEBI" id="CHEBI:597326"/>
    </cofactor>
</comment>
<comment type="pathway">
    <text evidence="1">Amino-acid biosynthesis; L-tryptophan biosynthesis; L-tryptophan from chorismate: step 5/5.</text>
</comment>
<comment type="subunit">
    <text evidence="1">Tetramer of two alpha and two beta chains.</text>
</comment>
<comment type="similarity">
    <text evidence="1">Belongs to the TrpB family.</text>
</comment>
<reference key="1">
    <citation type="submission" date="2008-05" db="EMBL/GenBank/DDBJ databases">
        <title>Complete sequence of Shigella boydii serotype 18 strain BS512.</title>
        <authorList>
            <person name="Rasko D.A."/>
            <person name="Rosovitz M."/>
            <person name="Maurelli A.T."/>
            <person name="Myers G."/>
            <person name="Seshadri R."/>
            <person name="Cer R."/>
            <person name="Jiang L."/>
            <person name="Ravel J."/>
            <person name="Sebastian Y."/>
        </authorList>
    </citation>
    <scope>NUCLEOTIDE SEQUENCE [LARGE SCALE GENOMIC DNA]</scope>
    <source>
        <strain>CDC 3083-94 / BS512</strain>
    </source>
</reference>
<gene>
    <name evidence="1" type="primary">trpB</name>
    <name type="ordered locus">SbBS512_E1486</name>
</gene>
<keyword id="KW-0028">Amino-acid biosynthesis</keyword>
<keyword id="KW-0057">Aromatic amino acid biosynthesis</keyword>
<keyword id="KW-0456">Lyase</keyword>
<keyword id="KW-0663">Pyridoxal phosphate</keyword>
<keyword id="KW-1185">Reference proteome</keyword>
<keyword id="KW-0822">Tryptophan biosynthesis</keyword>